<organism>
    <name type="scientific">Pyricularia oryzae (strain 70-15 / ATCC MYA-4617 / FGSC 8958)</name>
    <name type="common">Rice blast fungus</name>
    <name type="synonym">Magnaporthe oryzae</name>
    <dbReference type="NCBI Taxonomy" id="242507"/>
    <lineage>
        <taxon>Eukaryota</taxon>
        <taxon>Fungi</taxon>
        <taxon>Dikarya</taxon>
        <taxon>Ascomycota</taxon>
        <taxon>Pezizomycotina</taxon>
        <taxon>Sordariomycetes</taxon>
        <taxon>Sordariomycetidae</taxon>
        <taxon>Magnaporthales</taxon>
        <taxon>Pyriculariaceae</taxon>
        <taxon>Pyricularia</taxon>
    </lineage>
</organism>
<feature type="signal peptide" evidence="2">
    <location>
        <begin position="1"/>
        <end position="22"/>
    </location>
</feature>
<feature type="chain" id="PRO_0000407202" description="Extracellular metalloprotease MGG_08041">
    <location>
        <begin position="23"/>
        <end position="283"/>
    </location>
</feature>
<feature type="active site" evidence="3">
    <location>
        <position position="198"/>
    </location>
</feature>
<feature type="binding site" evidence="3">
    <location>
        <position position="197"/>
    </location>
    <ligand>
        <name>Zn(2+)</name>
        <dbReference type="ChEBI" id="CHEBI:29105"/>
        <note>catalytic</note>
    </ligand>
</feature>
<feature type="binding site" evidence="3">
    <location>
        <position position="201"/>
    </location>
    <ligand>
        <name>Zn(2+)</name>
        <dbReference type="ChEBI" id="CHEBI:29105"/>
        <note>catalytic</note>
    </ligand>
</feature>
<feature type="glycosylation site" description="N-linked (GlcNAc...) asparagine" evidence="2">
    <location>
        <position position="55"/>
    </location>
</feature>
<feature type="disulfide bond" evidence="1">
    <location>
        <begin position="233"/>
        <end position="260"/>
    </location>
</feature>
<comment type="function">
    <text evidence="1">Secreted metalloproteinase that allows assimilation of proteinaceous substrates.</text>
</comment>
<comment type="subcellular location">
    <subcellularLocation>
        <location evidence="1">Secreted</location>
    </subcellularLocation>
</comment>
<comment type="similarity">
    <text evidence="4">Belongs to the peptidase M43B family.</text>
</comment>
<sequence length="283" mass="29953">MQINVVKTFLFALAASSVSALAVDTEFRCGAPEPSEELIEASAIMAVAEAEAAANGTLAARQSALTIDTYVHVVATSTSASAGYLSDATIQQQLRVMNEDYAPSGIQFVLKGTDRTVNANWARDSGETAMKTALRKGTYKDLNLYFLSSIPGGILGYCYFPASATTSTVRLDGCTIASGTVPGGSISRFNLGKTAVHEVGHWFGLYHTFQGGCNGQGDLVDDTPAQASASSGCPIGRDSCPNQPGLDPIHNYMDYSDDSCYEEFTPGQNARMSSMFAQFRAGK</sequence>
<keyword id="KW-1015">Disulfide bond</keyword>
<keyword id="KW-0325">Glycoprotein</keyword>
<keyword id="KW-0378">Hydrolase</keyword>
<keyword id="KW-0479">Metal-binding</keyword>
<keyword id="KW-0482">Metalloprotease</keyword>
<keyword id="KW-0645">Protease</keyword>
<keyword id="KW-1185">Reference proteome</keyword>
<keyword id="KW-0964">Secreted</keyword>
<keyword id="KW-0732">Signal</keyword>
<keyword id="KW-0862">Zinc</keyword>
<reference key="1">
    <citation type="journal article" date="2005" name="Nature">
        <title>The genome sequence of the rice blast fungus Magnaporthe grisea.</title>
        <authorList>
            <person name="Dean R.A."/>
            <person name="Talbot N.J."/>
            <person name="Ebbole D.J."/>
            <person name="Farman M.L."/>
            <person name="Mitchell T.K."/>
            <person name="Orbach M.J."/>
            <person name="Thon M.R."/>
            <person name="Kulkarni R."/>
            <person name="Xu J.-R."/>
            <person name="Pan H."/>
            <person name="Read N.D."/>
            <person name="Lee Y.-H."/>
            <person name="Carbone I."/>
            <person name="Brown D."/>
            <person name="Oh Y.Y."/>
            <person name="Donofrio N."/>
            <person name="Jeong J.S."/>
            <person name="Soanes D.M."/>
            <person name="Djonovic S."/>
            <person name="Kolomiets E."/>
            <person name="Rehmeyer C."/>
            <person name="Li W."/>
            <person name="Harding M."/>
            <person name="Kim S."/>
            <person name="Lebrun M.-H."/>
            <person name="Bohnert H."/>
            <person name="Coughlan S."/>
            <person name="Butler J."/>
            <person name="Calvo S.E."/>
            <person name="Ma L.-J."/>
            <person name="Nicol R."/>
            <person name="Purcell S."/>
            <person name="Nusbaum C."/>
            <person name="Galagan J.E."/>
            <person name="Birren B.W."/>
        </authorList>
    </citation>
    <scope>NUCLEOTIDE SEQUENCE [LARGE SCALE GENOMIC DNA]</scope>
    <source>
        <strain>70-15 / ATCC MYA-4617 / FGSC 8958</strain>
    </source>
</reference>
<evidence type="ECO:0000250" key="1"/>
<evidence type="ECO:0000255" key="2"/>
<evidence type="ECO:0000255" key="3">
    <source>
        <dbReference type="PROSITE-ProRule" id="PRU10095"/>
    </source>
</evidence>
<evidence type="ECO:0000305" key="4"/>
<accession>A4RGT4</accession>
<accession>G4MXP9</accession>
<proteinExistence type="inferred from homology"/>
<protein>
    <recommendedName>
        <fullName>Extracellular metalloprotease MGG_08041</fullName>
        <ecNumber>3.4.24.-</ecNumber>
    </recommendedName>
</protein>
<name>MEP1_PYRO7</name>
<dbReference type="EC" id="3.4.24.-"/>
<dbReference type="EMBL" id="CM001232">
    <property type="protein sequence ID" value="EHA55186.1"/>
    <property type="molecule type" value="Genomic_DNA"/>
</dbReference>
<dbReference type="RefSeq" id="XP_003714993.1">
    <property type="nucleotide sequence ID" value="XM_003714945.1"/>
</dbReference>
<dbReference type="SMR" id="A4RGT4"/>
<dbReference type="MEROPS" id="M43.008"/>
<dbReference type="EnsemblFungi" id="MGG_08041T0">
    <property type="protein sequence ID" value="MGG_08041T0"/>
    <property type="gene ID" value="MGG_08041"/>
</dbReference>
<dbReference type="GeneID" id="2678331"/>
<dbReference type="KEGG" id="mgr:MGG_08041"/>
<dbReference type="VEuPathDB" id="FungiDB:MGG_08041"/>
<dbReference type="eggNOG" id="ENOG502QQ7Z">
    <property type="taxonomic scope" value="Eukaryota"/>
</dbReference>
<dbReference type="HOGENOM" id="CLU_048726_0_0_1"/>
<dbReference type="InParanoid" id="A4RGT4"/>
<dbReference type="OMA" id="CYKEFTP"/>
<dbReference type="OrthoDB" id="536211at2759"/>
<dbReference type="Proteomes" id="UP000009058">
    <property type="component" value="Chromosome 2"/>
</dbReference>
<dbReference type="GO" id="GO:0005576">
    <property type="term" value="C:extracellular region"/>
    <property type="evidence" value="ECO:0007669"/>
    <property type="project" value="UniProtKB-SubCell"/>
</dbReference>
<dbReference type="GO" id="GO:0046872">
    <property type="term" value="F:metal ion binding"/>
    <property type="evidence" value="ECO:0007669"/>
    <property type="project" value="UniProtKB-KW"/>
</dbReference>
<dbReference type="GO" id="GO:0008237">
    <property type="term" value="F:metallopeptidase activity"/>
    <property type="evidence" value="ECO:0007669"/>
    <property type="project" value="UniProtKB-KW"/>
</dbReference>
<dbReference type="GO" id="GO:0006508">
    <property type="term" value="P:proteolysis"/>
    <property type="evidence" value="ECO:0007669"/>
    <property type="project" value="UniProtKB-KW"/>
</dbReference>
<dbReference type="CDD" id="cd04275">
    <property type="entry name" value="ZnMc_pappalysin_like"/>
    <property type="match status" value="1"/>
</dbReference>
<dbReference type="Gene3D" id="3.40.390.10">
    <property type="entry name" value="Collagenase (Catalytic Domain)"/>
    <property type="match status" value="1"/>
</dbReference>
<dbReference type="InterPro" id="IPR024079">
    <property type="entry name" value="MetalloPept_cat_dom_sf"/>
</dbReference>
<dbReference type="InterPro" id="IPR008754">
    <property type="entry name" value="Peptidase_M43"/>
</dbReference>
<dbReference type="PANTHER" id="PTHR47466">
    <property type="match status" value="1"/>
</dbReference>
<dbReference type="PANTHER" id="PTHR47466:SF1">
    <property type="entry name" value="METALLOPROTEASE MEP1 (AFU_ORTHOLOGUE AFUA_1G07730)-RELATED"/>
    <property type="match status" value="1"/>
</dbReference>
<dbReference type="Pfam" id="PF05572">
    <property type="entry name" value="Peptidase_M43"/>
    <property type="match status" value="1"/>
</dbReference>
<dbReference type="SUPFAM" id="SSF55486">
    <property type="entry name" value="Metalloproteases ('zincins'), catalytic domain"/>
    <property type="match status" value="1"/>
</dbReference>
<dbReference type="PROSITE" id="PS00142">
    <property type="entry name" value="ZINC_PROTEASE"/>
    <property type="match status" value="1"/>
</dbReference>
<gene>
    <name type="ORF">MGG_08041</name>
</gene>